<feature type="signal peptide">
    <location>
        <begin position="1"/>
        <end position="18"/>
    </location>
</feature>
<feature type="chain" id="PRO_0000021168" description="Egg-lysin">
    <location>
        <begin position="19"/>
        <end position="154"/>
    </location>
</feature>
<feature type="helix" evidence="4">
    <location>
        <begin position="30"/>
        <end position="56"/>
    </location>
</feature>
<feature type="helix" evidence="4">
    <location>
        <begin position="57"/>
        <end position="59"/>
    </location>
</feature>
<feature type="helix" evidence="4">
    <location>
        <begin position="62"/>
        <end position="92"/>
    </location>
</feature>
<feature type="helix" evidence="4">
    <location>
        <begin position="100"/>
        <end position="113"/>
    </location>
</feature>
<feature type="helix" evidence="4">
    <location>
        <begin position="116"/>
        <end position="125"/>
    </location>
</feature>
<feature type="helix" evidence="4">
    <location>
        <begin position="134"/>
        <end position="140"/>
    </location>
</feature>
<feature type="helix" evidence="4">
    <location>
        <begin position="144"/>
        <end position="146"/>
    </location>
</feature>
<comment type="function">
    <text evidence="1 2">Creates a 3 um hole in the egg vitelline layer through which the sperm passes. Does not have enzyme activity (By similarity). Species-specific interaction between the sperm protein lysin and the egg protein VERL exposes a basic surface on lysin that may dissociate the egg vitelline layer via electrostatic repulsion. Plays a role in ensuring species-specific fertilization (PubMed:10698629).</text>
</comment>
<comment type="subunit">
    <text evidence="1 2">Monomer (By similarity). Homodimer (PubMed:10698629). Molecules associate into dimers and then rapidly dissociate again. Interacts (as a monomer) with the egg vitelline layer protein VERL (via VERL repeats); each VERL chain can bind multiple copies of lysin (By similarity).</text>
</comment>
<comment type="subcellular location">
    <subcellularLocation>
        <location evidence="1">Cytoplasmic vesicle</location>
        <location evidence="1">Secretory vesicle</location>
        <location evidence="1">Acrosome lumen</location>
    </subcellularLocation>
</comment>
<comment type="tissue specificity">
    <text>Sperm.</text>
</comment>
<protein>
    <recommendedName>
        <fullName>Egg-lysin</fullName>
    </recommendedName>
    <alternativeName>
        <fullName>Sperm-lysin</fullName>
    </alternativeName>
</protein>
<proteinExistence type="evidence at protein level"/>
<dbReference type="EMBL" id="M59972">
    <property type="protein sequence ID" value="AAA29202.1"/>
    <property type="molecule type" value="mRNA"/>
</dbReference>
<dbReference type="PDB" id="3LYN">
    <property type="method" value="X-ray"/>
    <property type="resolution" value="1.70 A"/>
    <property type="chains" value="A/B=19-154"/>
</dbReference>
<dbReference type="PDBsum" id="3LYN"/>
<dbReference type="SMR" id="Q01381"/>
<dbReference type="EvolutionaryTrace" id="Q01381"/>
<dbReference type="GO" id="GO:0043160">
    <property type="term" value="C:acrosomal lumen"/>
    <property type="evidence" value="ECO:0000250"/>
    <property type="project" value="UniProtKB"/>
</dbReference>
<dbReference type="GO" id="GO:0007338">
    <property type="term" value="P:single fertilization"/>
    <property type="evidence" value="ECO:0000250"/>
    <property type="project" value="UniProtKB"/>
</dbReference>
<dbReference type="CDD" id="cd00243">
    <property type="entry name" value="Lysin-Sp18"/>
    <property type="match status" value="1"/>
</dbReference>
<dbReference type="Gene3D" id="1.20.150.10">
    <property type="entry name" value="Fertilization protein"/>
    <property type="match status" value="1"/>
</dbReference>
<dbReference type="InterPro" id="IPR001379">
    <property type="entry name" value="Egg_lysin"/>
</dbReference>
<dbReference type="InterPro" id="IPR035916">
    <property type="entry name" value="Egg_lysin_sf"/>
</dbReference>
<dbReference type="Pfam" id="PF01303">
    <property type="entry name" value="Egg_lysin"/>
    <property type="match status" value="1"/>
</dbReference>
<dbReference type="PRINTS" id="PR01882">
    <property type="entry name" value="LYSIN"/>
</dbReference>
<dbReference type="SUPFAM" id="SSF47082">
    <property type="entry name" value="Fertilization protein"/>
    <property type="match status" value="1"/>
</dbReference>
<sequence>MKLLVLWVFAMMATVAMSRRWTFVRYHYINKAYEVTMKIQIISGFDRQLTAWLRVHGRRLTNNQKKTLFFVNRRYMQTHWQNYMLWVKRKIKALGRPAAVGDYTRLGAEIGRRVDMVFFYNFLSGRKMIPPYSAYMAKLNALRPADVPVKNHGK</sequence>
<reference key="1">
    <citation type="journal article" date="1992" name="Biol. Bull.">
        <title>The divergence of species-specific abalone sperm lysins is promoted by positive Darwinian selection.</title>
        <authorList>
            <person name="Lee Y.H."/>
            <person name="Vacquier V.D."/>
        </authorList>
    </citation>
    <scope>NUCLEOTIDE SEQUENCE [MRNA]</scope>
</reference>
<reference evidence="3" key="2">
    <citation type="journal article" date="2000" name="J. Mol. Biol.">
        <title>The high resolution crystal structure of green abalone sperm lysin: implications for species-specific binding of the egg receptor.</title>
        <authorList>
            <person name="Kresge N."/>
            <person name="Vacquier V.D."/>
            <person name="Stout C.D."/>
        </authorList>
    </citation>
    <scope>X-RAY CRYSTALLOGRAPHY (1.70 ANGSTROMS) OF 19-154</scope>
    <scope>SUBUNIT</scope>
    <scope>FUNCTION</scope>
</reference>
<organism>
    <name type="scientific">Haliotis fulgens</name>
    <name type="common">Green abalone</name>
    <dbReference type="NCBI Taxonomy" id="6456"/>
    <lineage>
        <taxon>Eukaryota</taxon>
        <taxon>Metazoa</taxon>
        <taxon>Spiralia</taxon>
        <taxon>Lophotrochozoa</taxon>
        <taxon>Mollusca</taxon>
        <taxon>Gastropoda</taxon>
        <taxon>Vetigastropoda</taxon>
        <taxon>Lepetellida</taxon>
        <taxon>Haliotoidea</taxon>
        <taxon>Haliotidae</taxon>
        <taxon>Haliotis</taxon>
    </lineage>
</organism>
<keyword id="KW-0002">3D-structure</keyword>
<keyword id="KW-0968">Cytoplasmic vesicle</keyword>
<keyword id="KW-0278">Fertilization</keyword>
<keyword id="KW-0732">Signal</keyword>
<name>ELYS_HALFU</name>
<accession>Q01381</accession>
<evidence type="ECO:0000250" key="1">
    <source>
        <dbReference type="UniProtKB" id="P04552"/>
    </source>
</evidence>
<evidence type="ECO:0000269" key="2">
    <source>
    </source>
</evidence>
<evidence type="ECO:0007744" key="3">
    <source>
        <dbReference type="PDB" id="3LYN"/>
    </source>
</evidence>
<evidence type="ECO:0007829" key="4">
    <source>
        <dbReference type="PDB" id="3LYN"/>
    </source>
</evidence>